<evidence type="ECO:0000250" key="1">
    <source>
        <dbReference type="UniProtKB" id="P59596"/>
    </source>
</evidence>
<evidence type="ECO:0000255" key="2">
    <source>
        <dbReference type="HAMAP-Rule" id="MF_04202"/>
    </source>
</evidence>
<evidence type="ECO:0000255" key="3">
    <source>
        <dbReference type="PROSITE-ProRule" id="PRU01275"/>
    </source>
</evidence>
<evidence type="ECO:0000269" key="4">
    <source>
    </source>
</evidence>
<evidence type="ECO:0000269" key="5">
    <source>
    </source>
</evidence>
<evidence type="ECO:0000269" key="6">
    <source>
    </source>
</evidence>
<evidence type="ECO:0000269" key="7">
    <source>
    </source>
</evidence>
<evidence type="ECO:0000269" key="8">
    <source>
    </source>
</evidence>
<evidence type="ECO:0000305" key="9"/>
<evidence type="ECO:0007744" key="10">
    <source>
        <dbReference type="PDB" id="7VGR"/>
    </source>
</evidence>
<evidence type="ECO:0007744" key="11">
    <source>
        <dbReference type="PDB" id="7VGS"/>
    </source>
</evidence>
<evidence type="ECO:0007744" key="12">
    <source>
        <dbReference type="PDB" id="8CTK"/>
    </source>
</evidence>
<evidence type="ECO:0007829" key="13">
    <source>
        <dbReference type="PDB" id="7VGR"/>
    </source>
</evidence>
<name>VME1_SARS2</name>
<keyword id="KW-0002">3D-structure</keyword>
<keyword id="KW-0325">Glycoprotein</keyword>
<keyword id="KW-1040">Host Golgi apparatus</keyword>
<keyword id="KW-1043">Host membrane</keyword>
<keyword id="KW-0945">Host-virus interaction</keyword>
<keyword id="KW-0472">Membrane</keyword>
<keyword id="KW-1185">Reference proteome</keyword>
<keyword id="KW-0812">Transmembrane</keyword>
<keyword id="KW-1133">Transmembrane helix</keyword>
<keyword id="KW-0261">Viral envelope protein</keyword>
<keyword id="KW-0899">Viral immunoevasion</keyword>
<keyword id="KW-0468">Viral matrix protein</keyword>
<keyword id="KW-0946">Virion</keyword>
<proteinExistence type="evidence at protein level"/>
<organism>
    <name type="scientific">Severe acute respiratory syndrome coronavirus 2</name>
    <name type="common">2019-nCoV</name>
    <name type="synonym">SARS-CoV-2</name>
    <dbReference type="NCBI Taxonomy" id="2697049"/>
    <lineage>
        <taxon>Viruses</taxon>
        <taxon>Riboviria</taxon>
        <taxon>Orthornavirae</taxon>
        <taxon>Pisuviricota</taxon>
        <taxon>Pisoniviricetes</taxon>
        <taxon>Nidovirales</taxon>
        <taxon>Cornidovirineae</taxon>
        <taxon>Coronaviridae</taxon>
        <taxon>Orthocoronavirinae</taxon>
        <taxon>Betacoronavirus</taxon>
        <taxon>Sarbecovirus</taxon>
        <taxon>Severe acute respiratory syndrome coronavirus</taxon>
    </lineage>
</organism>
<dbReference type="EMBL" id="MN908947">
    <property type="protein sequence ID" value="QHD43419.1"/>
    <property type="molecule type" value="Genomic_RNA"/>
</dbReference>
<dbReference type="RefSeq" id="YP_009724393.1">
    <property type="nucleotide sequence ID" value="NC_045512.2"/>
</dbReference>
<dbReference type="PDB" id="7VGR">
    <property type="method" value="EM"/>
    <property type="resolution" value="2.70 A"/>
    <property type="chains" value="A/B=1-222"/>
</dbReference>
<dbReference type="PDB" id="7VGS">
    <property type="method" value="EM"/>
    <property type="resolution" value="2.80 A"/>
    <property type="chains" value="A/B=1-222"/>
</dbReference>
<dbReference type="PDB" id="8CME">
    <property type="method" value="X-ray"/>
    <property type="resolution" value="2.26 A"/>
    <property type="chains" value="C/F/I=176-190"/>
</dbReference>
<dbReference type="PDB" id="8CTK">
    <property type="method" value="EM"/>
    <property type="resolution" value="3.52 A"/>
    <property type="chains" value="A/B=1-222"/>
</dbReference>
<dbReference type="PDB" id="8W2E">
    <property type="method" value="EM"/>
    <property type="resolution" value="3.06 A"/>
    <property type="chains" value="A/B=1-222"/>
</dbReference>
<dbReference type="PDB" id="9BF9">
    <property type="method" value="X-ray"/>
    <property type="resolution" value="3.40 A"/>
    <property type="chains" value="G=177-189"/>
</dbReference>
<dbReference type="PDB" id="9CTU">
    <property type="method" value="EM"/>
    <property type="resolution" value="3.03 A"/>
    <property type="chains" value="A/B=1-222"/>
</dbReference>
<dbReference type="PDB" id="9CTW">
    <property type="method" value="EM"/>
    <property type="resolution" value="3.01 A"/>
    <property type="chains" value="A/B=1-222"/>
</dbReference>
<dbReference type="PDB" id="9EXA">
    <property type="method" value="EM"/>
    <property type="resolution" value="3.20 A"/>
    <property type="chains" value="A/B=17-204"/>
</dbReference>
<dbReference type="PDBsum" id="7VGR"/>
<dbReference type="PDBsum" id="7VGS"/>
<dbReference type="PDBsum" id="8CME"/>
<dbReference type="PDBsum" id="8CTK"/>
<dbReference type="PDBsum" id="8W2E"/>
<dbReference type="PDBsum" id="9BF9"/>
<dbReference type="PDBsum" id="9CTU"/>
<dbReference type="PDBsum" id="9CTW"/>
<dbReference type="PDBsum" id="9EXA"/>
<dbReference type="EMDB" id="EMD-26993"/>
<dbReference type="EMDB" id="EMD-31977"/>
<dbReference type="EMDB" id="EMD-31978"/>
<dbReference type="EMDB" id="EMD-43745"/>
<dbReference type="EMDB" id="EMD-45919"/>
<dbReference type="EMDB" id="EMD-45921"/>
<dbReference type="EMDB" id="EMD-50034"/>
<dbReference type="EMDB" id="EMD-50035"/>
<dbReference type="SMR" id="P0DTC5"/>
<dbReference type="BioGRID" id="4383846">
    <property type="interactions" value="2342"/>
</dbReference>
<dbReference type="FunCoup" id="P0DTC5">
    <property type="interactions" value="208"/>
</dbReference>
<dbReference type="IntAct" id="P0DTC5">
    <property type="interactions" value="270"/>
</dbReference>
<dbReference type="MINT" id="P0DTC5"/>
<dbReference type="TCDB" id="1.A.117.1.2">
    <property type="family name" value="the coronavirus membrane matrix-protein (m-protein) family"/>
</dbReference>
<dbReference type="GlyGen" id="P0DTC5">
    <property type="glycosylation" value="1 site"/>
</dbReference>
<dbReference type="iPTMnet" id="P0DTC5"/>
<dbReference type="ABCD" id="P0DTC5">
    <property type="antibodies" value="10 sequenced antibodies"/>
</dbReference>
<dbReference type="DNASU" id="43740571"/>
<dbReference type="GeneID" id="43740571"/>
<dbReference type="AGR" id="RefSeq:YP_009724393"/>
<dbReference type="Reactome" id="R-HSA-1257604">
    <property type="pathway name" value="PIP3 activates AKT signaling"/>
</dbReference>
<dbReference type="Reactome" id="R-HSA-389357">
    <property type="pathway name" value="CD28 dependent PI3K/Akt signaling"/>
</dbReference>
<dbReference type="Reactome" id="R-HSA-5218920">
    <property type="pathway name" value="VEGFR2 mediated vascular permeability"/>
</dbReference>
<dbReference type="Reactome" id="R-HSA-918233">
    <property type="pathway name" value="TRAF3-dependent IRF activation pathway"/>
</dbReference>
<dbReference type="Reactome" id="R-HSA-9694322">
    <property type="pathway name" value="Virion Assembly and Release"/>
</dbReference>
<dbReference type="Reactome" id="R-HSA-9694594">
    <property type="pathway name" value="Maturation of protein M"/>
</dbReference>
<dbReference type="Reactome" id="R-HSA-9694614">
    <property type="pathway name" value="Attachment and Entry"/>
</dbReference>
<dbReference type="Reactome" id="R-HSA-9694635">
    <property type="pathway name" value="Translation of Structural Proteins"/>
</dbReference>
<dbReference type="Reactome" id="R-HSA-9705671">
    <property type="pathway name" value="SARS-CoV-2 activates/modulates innate and adaptive immune responses"/>
</dbReference>
<dbReference type="Reactome" id="R-HSA-9733458">
    <property type="pathway name" value="Induction of Cell-Cell Fusion"/>
</dbReference>
<dbReference type="Reactome" id="R-HSA-9754560">
    <property type="pathway name" value="SARS-CoV-2 modulates autophagy"/>
</dbReference>
<dbReference type="Reactome" id="R-HSA-9755779">
    <property type="pathway name" value="SARS-CoV-2 targets host intracellular signalling and regulatory pathways"/>
</dbReference>
<dbReference type="SIGNOR" id="P0DTC5"/>
<dbReference type="PRO" id="PR:P0DTC5"/>
<dbReference type="Proteomes" id="UP000464024">
    <property type="component" value="Genome"/>
</dbReference>
<dbReference type="GO" id="GO:0044178">
    <property type="term" value="C:host cell Golgi membrane"/>
    <property type="evidence" value="ECO:0007669"/>
    <property type="project" value="UniProtKB-SubCell"/>
</dbReference>
<dbReference type="GO" id="GO:0005886">
    <property type="term" value="C:plasma membrane"/>
    <property type="evidence" value="ECO:0000304"/>
    <property type="project" value="Reactome"/>
</dbReference>
<dbReference type="GO" id="GO:0019031">
    <property type="term" value="C:viral envelope"/>
    <property type="evidence" value="ECO:0007669"/>
    <property type="project" value="UniProtKB-UniRule"/>
</dbReference>
<dbReference type="GO" id="GO:0055036">
    <property type="term" value="C:virion membrane"/>
    <property type="evidence" value="ECO:0000304"/>
    <property type="project" value="Reactome"/>
</dbReference>
<dbReference type="GO" id="GO:0042802">
    <property type="term" value="F:identical protein binding"/>
    <property type="evidence" value="ECO:0000353"/>
    <property type="project" value="IntAct"/>
</dbReference>
<dbReference type="GO" id="GO:0140311">
    <property type="term" value="F:protein sequestering activity"/>
    <property type="evidence" value="ECO:0000314"/>
    <property type="project" value="UniProt"/>
</dbReference>
<dbReference type="GO" id="GO:0039660">
    <property type="term" value="F:structural constituent of virion"/>
    <property type="evidence" value="ECO:0007669"/>
    <property type="project" value="UniProtKB-UniRule"/>
</dbReference>
<dbReference type="GO" id="GO:0039545">
    <property type="term" value="P:symbiont-mediated suppression of host cytoplasmic pattern recognition receptor signaling pathway via inhibition of MAVS activity"/>
    <property type="evidence" value="ECO:0000314"/>
    <property type="project" value="UniProt"/>
</dbReference>
<dbReference type="CDD" id="cd21569">
    <property type="entry name" value="SARS-like-CoV_M"/>
    <property type="match status" value="1"/>
</dbReference>
<dbReference type="HAMAP" id="MF_04202">
    <property type="entry name" value="BETA_CORONA_M"/>
    <property type="match status" value="1"/>
</dbReference>
<dbReference type="InterPro" id="IPR002574">
    <property type="entry name" value="M_CoV"/>
</dbReference>
<dbReference type="InterPro" id="IPR044361">
    <property type="entry name" value="M_SARS-like-CoV"/>
</dbReference>
<dbReference type="Pfam" id="PF01635">
    <property type="entry name" value="CoV_M"/>
    <property type="match status" value="1"/>
</dbReference>
<dbReference type="PROSITE" id="PS51927">
    <property type="entry name" value="COV_M"/>
    <property type="match status" value="1"/>
</dbReference>
<comment type="function">
    <text evidence="2 3 5">Component of the viral envelope that plays a central role in virus morphogenesis and assembly via its interactions with other viral proteins (By similarity). Regulates the localization of S protein at cis-Golgi, the place of virus budding (PubMed:33229438). May act by binding cytoplasmic c-terminus of S (PubMed:33229438).</text>
</comment>
<comment type="subunit">
    <text evidence="1 2 5 6">Homomultimer (PubMed:35931673). Interacts with envelope E protein in the budding compartment of the host cell, which is located between endoplasmic reticulum and the Golgi complex (By similarity). Forms a complex with S proteins (PubMed:33229438). Interacts with nucleocapsid N protein. This interaction probably participates in RNA packaging into the virus (PubMed:35931673). Interacts with the accessory proteins 3a and 7a (By similarity).</text>
</comment>
<comment type="interaction">
    <interactant intactId="EBI-25475853">
        <id>P0DTC5</id>
    </interactant>
    <interactant intactId="EBI-25475914">
        <id>P0DTD8</id>
        <label>7b</label>
    </interactant>
    <organismsDiffer>false</organismsDiffer>
    <experiments>4</experiments>
</comment>
<comment type="interaction">
    <interactant intactId="EBI-25475853">
        <id>P0DTC5</id>
    </interactant>
    <interactant intactId="EBI-25475850">
        <id>P0DTC4</id>
        <label>E</label>
    </interactant>
    <organismsDiffer>false</organismsDiffer>
    <experiments>5</experiments>
</comment>
<comment type="interaction">
    <interactant intactId="EBI-25475853">
        <id>P0DTC5</id>
    </interactant>
    <interactant intactId="EBI-25475853">
        <id>P0DTC5</id>
        <label>M</label>
    </interactant>
    <organismsDiffer>false</organismsDiffer>
    <experiments>4</experiments>
</comment>
<comment type="interaction">
    <interactant intactId="EBI-25475853">
        <id>P0DTC5</id>
    </interactant>
    <interactant intactId="EBI-25475856">
        <id>P0DTC9</id>
        <label>N</label>
    </interactant>
    <organismsDiffer>false</organismsDiffer>
    <experiments>6</experiments>
</comment>
<comment type="interaction">
    <interactant intactId="EBI-25475853">
        <id>P0DTC5</id>
    </interactant>
    <interactant intactId="EBI-6115771">
        <id>Q9BYX4</id>
        <label>IFIH1</label>
    </interactant>
    <organismsDiffer>true</organismsDiffer>
    <experiments>3</experiments>
</comment>
<comment type="interaction">
    <interactant intactId="EBI-25475853">
        <id>P0DTC5</id>
    </interactant>
    <interactant intactId="EBI-995373">
        <id>Q7Z434</id>
        <label>MAVS</label>
    </interactant>
    <organismsDiffer>true</organismsDiffer>
    <experiments>11</experiments>
</comment>
<comment type="interaction">
    <interactant intactId="EBI-25475853">
        <id>P0DTC5</id>
    </interactant>
    <interactant intactId="EBI-722193">
        <id>O00487</id>
        <label>PSMD14</label>
    </interactant>
    <organismsDiffer>true</organismsDiffer>
    <experiments>2</experiments>
</comment>
<comment type="interaction">
    <interactant intactId="EBI-25475853">
        <id>P0DTC5</id>
    </interactant>
    <interactant intactId="EBI-356402">
        <id>Q9UHD2</id>
        <label>TBK1</label>
    </interactant>
    <organismsDiffer>true</organismsDiffer>
    <experiments>10</experiments>
</comment>
<comment type="subcellular location">
    <subcellularLocation>
        <location evidence="2">Virion membrane</location>
        <topology evidence="2">Multi-pass membrane protein</topology>
    </subcellularLocation>
    <subcellularLocation>
        <location evidence="2 4">Host Golgi apparatus membrane</location>
        <topology evidence="2">Multi-pass membrane protein</topology>
    </subcellularLocation>
    <subcellularLocation>
        <location evidence="4">Host membrane</location>
        <topology>Multi-pass membrane protein</topology>
    </subcellularLocation>
    <text evidence="2">Largely embedded in the lipid bilayer.</text>
</comment>
<comment type="PTM">
    <text evidence="6 7 8">Glycosylated at N-terminus by host.</text>
</comment>
<comment type="polymorphism">
    <text evidence="9">Variant Delta/B.1.617.2 belongs to a lineage first isolated in India (October 2020) and is also called G/478K.V1. It has an estimated 97% increase of transmissibility.</text>
</comment>
<comment type="polymorphism">
    <text evidence="9">Variant Omicron/BA.1 and BA.2 belong to a lineage first isolated in South Africa (November 2021).</text>
</comment>
<comment type="polymorphism">
    <text evidence="9">Variant Omicron/BQ.1.1 belongs to a lineage first isolated in Nigeria (November 2022).</text>
</comment>
<comment type="polymorphism">
    <text evidence="9">Variant Omicron/XBB.1.5 belongs to a lineage first isolated in United States (November 2022). It is the result of recombination between omicron BJ.1 and BM.1.1. Moreover XBB.1.5 do not express ORF8.</text>
</comment>
<comment type="similarity">
    <text evidence="2">Belongs to the betacoronaviruses M protein family.</text>
</comment>
<protein>
    <recommendedName>
        <fullName evidence="2">Membrane protein</fullName>
        <shortName>M</shortName>
    </recommendedName>
    <alternativeName>
        <fullName evidence="2">E1 glycoprotein</fullName>
    </alternativeName>
    <alternativeName>
        <fullName evidence="2">Matrix glycoprotein</fullName>
    </alternativeName>
    <alternativeName>
        <fullName evidence="2">Membrane glycoprotein</fullName>
    </alternativeName>
</protein>
<feature type="chain" id="PRO_0000449652" description="Membrane protein">
    <location>
        <begin position="1"/>
        <end position="222"/>
    </location>
</feature>
<feature type="topological domain" description="Virion surface" evidence="7">
    <location>
        <begin position="2"/>
        <end position="16"/>
    </location>
</feature>
<feature type="transmembrane region" description="Helical" evidence="7">
    <location>
        <begin position="17"/>
        <end position="36"/>
    </location>
</feature>
<feature type="topological domain" description="Intravirion" evidence="7">
    <location>
        <begin position="37"/>
        <end position="44"/>
    </location>
</feature>
<feature type="transmembrane region" description="Helical" evidence="7">
    <location>
        <begin position="45"/>
        <end position="70"/>
    </location>
</feature>
<feature type="topological domain" description="Virion surface" evidence="7">
    <location>
        <begin position="71"/>
        <end position="75"/>
    </location>
</feature>
<feature type="transmembrane region" description="Helical" evidence="7">
    <location>
        <begin position="76"/>
        <end position="105"/>
    </location>
</feature>
<feature type="topological domain" description="Intravirion" evidence="7">
    <location>
        <begin position="106"/>
        <end position="222"/>
    </location>
</feature>
<feature type="glycosylation site" description="N-linked (GlcNAc...) asparagine; by host" evidence="6 7 8">
    <location>
        <position position="5"/>
    </location>
</feature>
<feature type="sequence variant" description="In strain: Omicron/BA.1." evidence="9">
    <original>D</original>
    <variation>G</variation>
    <location>
        <position position="3"/>
    </location>
</feature>
<feature type="sequence variant" description="In strain: Omicron/BA.5, Omicron/BQ.1.1." evidence="9">
    <original>D</original>
    <variation>N</variation>
    <location>
        <position position="3"/>
    </location>
</feature>
<feature type="sequence variant" description="In strain: Omicron/BA.1, Omicron/BA.2, Omicron/BA.2.12.1, Omicron/BA.2.75, Omicron/BA.4, Omicron/BA.5, Omicron/BQ.1.1, Omicron/XBB.1.5, Omicron/EG.5.1." evidence="9">
    <original>Q</original>
    <variation>E</variation>
    <location>
        <position position="19"/>
    </location>
</feature>
<feature type="sequence variant" description="In strain: Omicron/BA.1, Omicron/BA.2, Omicron/BA.2.12.1, Omicron/BA.2.75, Omicron/BA.4, Omicron/BA.5, Omicron/BQ.1.1, Omicron/XBB.1.5, Omicron/EG.5.1." evidence="9">
    <original>A</original>
    <variation>T</variation>
    <location>
        <position position="63"/>
    </location>
</feature>
<feature type="sequence variant" description="In strain: Eta/B.1.525 and Delta/B.1.617.2." evidence="9">
    <original>I</original>
    <variation>T</variation>
    <location>
        <position position="82"/>
    </location>
</feature>
<feature type="mutagenesis site" description="Partial loss of N-RNA binding." evidence="6">
    <original>RNR</original>
    <variation>ANA</variation>
    <location>
        <begin position="42"/>
        <end position="44"/>
    </location>
</feature>
<feature type="helix" evidence="13">
    <location>
        <begin position="11"/>
        <end position="36"/>
    </location>
</feature>
<feature type="turn" evidence="13">
    <location>
        <begin position="40"/>
        <end position="42"/>
    </location>
</feature>
<feature type="helix" evidence="13">
    <location>
        <begin position="44"/>
        <end position="70"/>
    </location>
</feature>
<feature type="helix" evidence="13">
    <location>
        <begin position="77"/>
        <end position="105"/>
    </location>
</feature>
<feature type="helix" evidence="13">
    <location>
        <begin position="109"/>
        <end position="112"/>
    </location>
</feature>
<feature type="strand" evidence="13">
    <location>
        <begin position="117"/>
        <end position="135"/>
    </location>
</feature>
<feature type="strand" evidence="13">
    <location>
        <begin position="138"/>
        <end position="140"/>
    </location>
</feature>
<feature type="turn" evidence="13">
    <location>
        <begin position="145"/>
        <end position="147"/>
    </location>
</feature>
<feature type="strand" evidence="13">
    <location>
        <begin position="149"/>
        <end position="151"/>
    </location>
</feature>
<feature type="strand" evidence="13">
    <location>
        <begin position="154"/>
        <end position="157"/>
    </location>
</feature>
<feature type="strand" evidence="13">
    <location>
        <begin position="167"/>
        <end position="170"/>
    </location>
</feature>
<feature type="strand" evidence="13">
    <location>
        <begin position="172"/>
        <end position="174"/>
    </location>
</feature>
<feature type="strand" evidence="13">
    <location>
        <begin position="177"/>
        <end position="182"/>
    </location>
</feature>
<feature type="strand" evidence="13">
    <location>
        <begin position="188"/>
        <end position="190"/>
    </location>
</feature>
<feature type="strand" evidence="13">
    <location>
        <begin position="195"/>
        <end position="200"/>
    </location>
</feature>
<organismHost>
    <name type="scientific">Homo sapiens</name>
    <name type="common">Human</name>
    <dbReference type="NCBI Taxonomy" id="9606"/>
</organismHost>
<reference key="1">
    <citation type="journal article" date="2020" name="Nature">
        <title>A new coronavirus associated with human respiratory disease in China.</title>
        <authorList>
            <person name="Wu F."/>
            <person name="Zhao S."/>
            <person name="Yu B."/>
            <person name="Chen Y.-M."/>
            <person name="Wang W."/>
            <person name="Song Z.-G."/>
            <person name="Hu Y."/>
            <person name="Tao Z.-W."/>
            <person name="Tian J.-H."/>
            <person name="Pei Y.-Y."/>
            <person name="Yuan M.-L."/>
            <person name="Zhang Y.-L."/>
            <person name="Dai F.-H."/>
            <person name="Liu Y."/>
            <person name="Wang Q.-M."/>
            <person name="Zheng J.-J."/>
            <person name="Xu L."/>
            <person name="Holmes E.C."/>
            <person name="Zhang Y.-Z."/>
        </authorList>
    </citation>
    <scope>NUCLEOTIDE SEQUENCE [GENOMIC RNA]</scope>
</reference>
<reference key="2">
    <citation type="journal article" date="2020" name="Science">
        <title>Comparative host-coronavirus protein interaction networks reveal pan-viral disease mechanisms.</title>
        <authorList>
            <consortium name="QCRG Structural Biology Consortium"/>
            <consortium name="Zoonomia Consortium"/>
            <person name="Gordon D.E."/>
            <person name="Hiatt J."/>
            <person name="Bouhaddou M."/>
            <person name="Rezelj V.V."/>
            <person name="Ulferts S."/>
            <person name="Braberg H."/>
            <person name="Jureka A.S."/>
            <person name="Obernier K."/>
            <person name="Guo J.Z."/>
            <person name="Batra J."/>
            <person name="Kaake R.M."/>
            <person name="Weckstein A.R."/>
            <person name="Owens T.W."/>
            <person name="Gupta M."/>
            <person name="Pourmal S."/>
            <person name="Titus E.W."/>
            <person name="Cakir M."/>
            <person name="Soucheray M."/>
            <person name="McGregor M."/>
            <person name="Cakir Z."/>
            <person name="Jang G."/>
            <person name="O'Meara M.J."/>
            <person name="Tummino T.A."/>
            <person name="Zhang Z."/>
            <person name="Foussard H."/>
            <person name="Rojc A."/>
            <person name="Zhou Y."/>
            <person name="Kuchenov D."/>
            <person name="Huettenhain R."/>
            <person name="Xu J."/>
            <person name="Eckhardt M."/>
            <person name="Swaney D.L."/>
            <person name="Fabius J.M."/>
            <person name="Ummadi M."/>
            <person name="Tutuncuoglu B."/>
            <person name="Rathore U."/>
            <person name="Modak M."/>
            <person name="Haas P."/>
            <person name="Haas K.M."/>
            <person name="Naing Z.Z.C."/>
            <person name="Pulido E.H."/>
            <person name="Shi Y."/>
            <person name="Barrio-Hernandez I."/>
            <person name="Memon D."/>
            <person name="Petsalaki E."/>
            <person name="Dunham A."/>
            <person name="Marrero M.C."/>
            <person name="Burke D."/>
            <person name="Koh C."/>
            <person name="Vallet T."/>
            <person name="Silvas J.A."/>
            <person name="Azumaya C.M."/>
            <person name="Billesboelle C."/>
            <person name="Brilot A.F."/>
            <person name="Campbell M.G."/>
            <person name="Diallo A."/>
            <person name="Dickinson M.S."/>
            <person name="Diwanji D."/>
            <person name="Herrera N."/>
            <person name="Hoppe N."/>
            <person name="Kratochvil H.T."/>
            <person name="Liu Y."/>
            <person name="Merz G.E."/>
            <person name="Moritz M."/>
            <person name="Nguyen H.C."/>
            <person name="Nowotny C."/>
            <person name="Puchades C."/>
            <person name="Rizo A.N."/>
            <person name="Schulze-Gahmen U."/>
            <person name="Smith A.M."/>
            <person name="Sun M."/>
            <person name="Young I.D."/>
            <person name="Zhao J."/>
            <person name="Asarnow D."/>
            <person name="Biel J."/>
            <person name="Bowen A."/>
            <person name="Braxton J.R."/>
            <person name="Chen J."/>
            <person name="Chio C.M."/>
            <person name="Chio U.S."/>
            <person name="Deshpande I."/>
            <person name="Doan L."/>
            <person name="Faust B."/>
            <person name="Flores S."/>
            <person name="Jin M."/>
            <person name="Kim K."/>
            <person name="Lam V.L."/>
            <person name="Li F."/>
            <person name="Li J."/>
            <person name="Li Y.L."/>
            <person name="Li Y."/>
            <person name="Liu X."/>
            <person name="Lo M."/>
            <person name="Lopez K.E."/>
            <person name="Melo A.A."/>
            <person name="Moss F.R. III"/>
            <person name="Nguyen P."/>
            <person name="Paulino J."/>
            <person name="Pawar K.I."/>
            <person name="Peters J.K."/>
            <person name="Pospiech T.H. Jr."/>
            <person name="Safari M."/>
            <person name="Sangwan S."/>
            <person name="Schaefer K."/>
            <person name="Thomas P.V."/>
            <person name="Thwin A.C."/>
            <person name="Trenker R."/>
            <person name="Tse E."/>
            <person name="Tsui T.K.M."/>
            <person name="Wang F."/>
            <person name="Whitis N."/>
            <person name="Yu Z."/>
            <person name="Zhang K."/>
            <person name="Zhang Y."/>
            <person name="Zhou F."/>
            <person name="Saltzberg D."/>
            <person name="Hodder A.J."/>
            <person name="Shun-Shion A.S."/>
            <person name="Williams D.M."/>
            <person name="White K.M."/>
            <person name="Rosales R."/>
            <person name="Kehrer T."/>
            <person name="Miorin L."/>
            <person name="Moreno E."/>
            <person name="Patel A.H."/>
            <person name="Rihn S."/>
            <person name="Khalid M.M."/>
            <person name="Vallejo-Gracia A."/>
            <person name="Fozouni P."/>
            <person name="Simoneau C.R."/>
            <person name="Roth T.L."/>
            <person name="Wu D."/>
            <person name="Karim M.A."/>
            <person name="Ghoussaini M."/>
            <person name="Dunham I."/>
            <person name="Berardi F."/>
            <person name="Weigang S."/>
            <person name="Chazal M."/>
            <person name="Park J."/>
            <person name="Logue J."/>
            <person name="McGrath M."/>
            <person name="Weston S."/>
            <person name="Haupt R."/>
            <person name="Hastie C.J."/>
            <person name="Elliott M."/>
            <person name="Brown F."/>
            <person name="Burness K.A."/>
            <person name="Reid E."/>
            <person name="Dorward M."/>
            <person name="Johnson C."/>
            <person name="Wilkinson S.G."/>
            <person name="Geyer A."/>
            <person name="Giesel D.M."/>
            <person name="Baillie C."/>
            <person name="Raggett S."/>
            <person name="Leech H."/>
            <person name="Toth R."/>
            <person name="Goodman N."/>
            <person name="Keough K.C."/>
            <person name="Lind A.L."/>
            <person name="Klesh R.J."/>
            <person name="Hemphill K.R."/>
            <person name="Carlson-Stevermer J."/>
            <person name="Oki J."/>
            <person name="Holden K."/>
            <person name="Maures T."/>
            <person name="Pollard K.S."/>
            <person name="Sali A."/>
            <person name="Agard D.A."/>
            <person name="Cheng Y."/>
            <person name="Fraser J.S."/>
            <person name="Frost A."/>
            <person name="Jura N."/>
            <person name="Kortemme T."/>
            <person name="Manglik A."/>
            <person name="Southworth D.R."/>
            <person name="Stroud R.M."/>
            <person name="Alessi D.R."/>
            <person name="Davies P."/>
            <person name="Frieman M.B."/>
            <person name="Ideker T."/>
            <person name="Abate C."/>
            <person name="Jouvenet N."/>
            <person name="Kochs G."/>
            <person name="Shoichet B."/>
            <person name="Ott M."/>
            <person name="Palmarini M."/>
            <person name="Shokat K.M."/>
            <person name="Garcia-Sastre A."/>
            <person name="Rassen J.A."/>
            <person name="Grosse R."/>
            <person name="Rosenberg O.S."/>
            <person name="Verba K.A."/>
            <person name="Basler C.F."/>
            <person name="Vignuzzi M."/>
            <person name="Peden A.A."/>
            <person name="Beltrao P."/>
            <person name="Krogan N.J."/>
        </authorList>
    </citation>
    <scope>SUBCELLULAR LOCATION</scope>
</reference>
<reference key="3">
    <citation type="journal article" date="2020" name="J. Biol. Chem.">
        <title>The SARS-CoV-2 Envelope and Membrane proteins modulate maturation and retention of the Spike protein, allowing assembly of virus-like particles.</title>
        <authorList>
            <person name="Boson B."/>
            <person name="Legros V."/>
            <person name="Zhou B."/>
            <person name="Siret E."/>
            <person name="Mathieu C."/>
            <person name="Cosset F.L."/>
            <person name="Lavillette D."/>
            <person name="Denolly S."/>
        </authorList>
    </citation>
    <scope>INTERACTION WITH S PROTEIN</scope>
    <scope>FUNCTION</scope>
</reference>
<reference key="4">
    <citation type="journal article" date="2024" name="Biology">
        <title>Influence of Mutations and N-Glycosylation Sites in the Receptor-Binding Domain (RBD) and the Membrane Protein of SARS-CoV-2 Variants of Concern on Antibody Binding in ELISA.</title>
        <authorList>
            <person name="Schwarze M."/>
            <person name="Volke D."/>
            <person name="Rojas Echeverri J.C."/>
            <person name="Schick R."/>
            <person name="Lakowa N."/>
            <person name="Gruenewald T."/>
            <person name="Wolf J."/>
            <person name="Borte S."/>
            <person name="Scholz M."/>
            <person name="Krizsan A."/>
            <person name="Hoffmann R."/>
        </authorList>
    </citation>
    <scope>GLYCOSYLATION AT ASN-5</scope>
    <scope>IDENTIFICATION BY MASS SPECTROMETRY</scope>
</reference>
<reference evidence="12" key="5">
    <citation type="journal article" date="2022" name="Elife">
        <title>Structure of SARS-CoV-2 M protein in lipid nanodiscs.</title>
        <authorList>
            <person name="Dolan K.A."/>
            <person name="Dutta M."/>
            <person name="Kern D.M."/>
            <person name="Kotecha A."/>
            <person name="Voth G.A."/>
            <person name="Brohawn S.G."/>
        </authorList>
    </citation>
    <scope>STRUCTURE BY ELECTRON MICROSCOPY (3.52 ANGSTROMS)</scope>
    <scope>TOPOLOGY</scope>
    <scope>GLYCOSYLATION AT ASN-5</scope>
</reference>
<reference evidence="10 11" key="6">
    <citation type="journal article" date="2022" name="Nat. Commun.">
        <title>Structure of SARS-CoV-2 membrane protein essential for virus assembly.</title>
        <authorList>
            <person name="Zhang Z."/>
            <person name="Nomura N."/>
            <person name="Muramoto Y."/>
            <person name="Ekimoto T."/>
            <person name="Uemura T."/>
            <person name="Liu K."/>
            <person name="Yui M."/>
            <person name="Kono N."/>
            <person name="Aoki J."/>
            <person name="Ikeguchi M."/>
            <person name="Noda T."/>
            <person name="Iwata S."/>
            <person name="Ohto U."/>
            <person name="Shimizu T."/>
        </authorList>
    </citation>
    <scope>STRUCTURE BY ELECTRON MICROSCOPY (2.70 ANGSTROMS)</scope>
    <scope>SUBUNIT</scope>
    <scope>MUTAGENESIS OF 42-ARG--ARG-44</scope>
    <scope>GLYCOSYLATION AT ASN-5</scope>
</reference>
<gene>
    <name type="ORF">M</name>
</gene>
<accession>P0DTC5</accession>
<sequence length="222" mass="25147">MADSNGTITVEELKKLLEQWNLVIGFLFLTWICLLQFAYANRNRFLYIIKLIFLWLLWPVTLACFVLAAVYRINWITGGIAIAMACLVGLMWLSYFIASFRLFARTRSMWSFNPETNILLNVPLHGTILTRPLLESELVIGAVILRGHLRIAGHHLGRCDIKDLPKEITVATSRTLSYYKLGASQRVAGDSGFAAYSRYRIGNYKLNTDHSSSSDNIALLVQ</sequence>